<protein>
    <recommendedName>
        <fullName evidence="1">Transcription elongation factor GreA</fullName>
    </recommendedName>
    <alternativeName>
        <fullName evidence="1">Transcript cleavage factor GreA</fullName>
    </alternativeName>
</protein>
<keyword id="KW-0175">Coiled coil</keyword>
<keyword id="KW-0238">DNA-binding</keyword>
<keyword id="KW-1185">Reference proteome</keyword>
<keyword id="KW-0804">Transcription</keyword>
<keyword id="KW-0805">Transcription regulation</keyword>
<accession>A5IYH4</accession>
<reference key="1">
    <citation type="journal article" date="2007" name="PLoS Genet.">
        <title>Being pathogenic, plastic, and sexual while living with a nearly minimal bacterial genome.</title>
        <authorList>
            <person name="Sirand-Pugnet P."/>
            <person name="Lartigue C."/>
            <person name="Marenda M."/>
            <person name="Jacob D."/>
            <person name="Barre A."/>
            <person name="Barbe V."/>
            <person name="Schenowitz C."/>
            <person name="Mangenot S."/>
            <person name="Couloux A."/>
            <person name="Segurens B."/>
            <person name="de Daruvar A."/>
            <person name="Blanchard A."/>
            <person name="Citti C."/>
        </authorList>
    </citation>
    <scope>NUCLEOTIDE SEQUENCE [LARGE SCALE GENOMIC DNA]</scope>
    <source>
        <strain>NCTC 10123 / CIP 59.7 / PG2</strain>
    </source>
</reference>
<dbReference type="EMBL" id="CU179680">
    <property type="protein sequence ID" value="CAL59083.1"/>
    <property type="molecule type" value="Genomic_DNA"/>
</dbReference>
<dbReference type="RefSeq" id="WP_004023819.1">
    <property type="nucleotide sequence ID" value="NC_009497.1"/>
</dbReference>
<dbReference type="SMR" id="A5IYH4"/>
<dbReference type="STRING" id="347257.MAG3850"/>
<dbReference type="GeneID" id="66645717"/>
<dbReference type="GeneID" id="93358145"/>
<dbReference type="KEGG" id="maa:MAG3850"/>
<dbReference type="HOGENOM" id="CLU_101379_2_1_14"/>
<dbReference type="Proteomes" id="UP000007065">
    <property type="component" value="Chromosome"/>
</dbReference>
<dbReference type="GO" id="GO:0003677">
    <property type="term" value="F:DNA binding"/>
    <property type="evidence" value="ECO:0007669"/>
    <property type="project" value="UniProtKB-UniRule"/>
</dbReference>
<dbReference type="GO" id="GO:0070063">
    <property type="term" value="F:RNA polymerase binding"/>
    <property type="evidence" value="ECO:0007669"/>
    <property type="project" value="InterPro"/>
</dbReference>
<dbReference type="GO" id="GO:0006354">
    <property type="term" value="P:DNA-templated transcription elongation"/>
    <property type="evidence" value="ECO:0007669"/>
    <property type="project" value="TreeGrafter"/>
</dbReference>
<dbReference type="GO" id="GO:0032784">
    <property type="term" value="P:regulation of DNA-templated transcription elongation"/>
    <property type="evidence" value="ECO:0007669"/>
    <property type="project" value="UniProtKB-UniRule"/>
</dbReference>
<dbReference type="FunFam" id="1.10.287.180:FF:000001">
    <property type="entry name" value="Transcription elongation factor GreA"/>
    <property type="match status" value="1"/>
</dbReference>
<dbReference type="Gene3D" id="3.10.50.30">
    <property type="entry name" value="Transcription elongation factor, GreA/GreB, C-terminal domain"/>
    <property type="match status" value="1"/>
</dbReference>
<dbReference type="Gene3D" id="1.10.287.180">
    <property type="entry name" value="Transcription elongation factor, GreA/GreB, N-terminal domain"/>
    <property type="match status" value="1"/>
</dbReference>
<dbReference type="HAMAP" id="MF_00105">
    <property type="entry name" value="GreA_GreB"/>
    <property type="match status" value="1"/>
</dbReference>
<dbReference type="InterPro" id="IPR036953">
    <property type="entry name" value="GreA/GreB_C_sf"/>
</dbReference>
<dbReference type="InterPro" id="IPR006359">
    <property type="entry name" value="Tscrpt_elong_fac_GreA"/>
</dbReference>
<dbReference type="InterPro" id="IPR028624">
    <property type="entry name" value="Tscrpt_elong_fac_GreA/B"/>
</dbReference>
<dbReference type="InterPro" id="IPR001437">
    <property type="entry name" value="Tscrpt_elong_fac_GreA/B_C"/>
</dbReference>
<dbReference type="InterPro" id="IPR023459">
    <property type="entry name" value="Tscrpt_elong_fac_GreA/B_fam"/>
</dbReference>
<dbReference type="InterPro" id="IPR022691">
    <property type="entry name" value="Tscrpt_elong_fac_GreA/B_N"/>
</dbReference>
<dbReference type="InterPro" id="IPR036805">
    <property type="entry name" value="Tscrpt_elong_fac_GreA/B_N_sf"/>
</dbReference>
<dbReference type="NCBIfam" id="TIGR01462">
    <property type="entry name" value="greA"/>
    <property type="match status" value="1"/>
</dbReference>
<dbReference type="NCBIfam" id="NF001263">
    <property type="entry name" value="PRK00226.1-4"/>
    <property type="match status" value="1"/>
</dbReference>
<dbReference type="PANTHER" id="PTHR30437">
    <property type="entry name" value="TRANSCRIPTION ELONGATION FACTOR GREA"/>
    <property type="match status" value="1"/>
</dbReference>
<dbReference type="PANTHER" id="PTHR30437:SF4">
    <property type="entry name" value="TRANSCRIPTION ELONGATION FACTOR GREA"/>
    <property type="match status" value="1"/>
</dbReference>
<dbReference type="Pfam" id="PF01272">
    <property type="entry name" value="GreA_GreB"/>
    <property type="match status" value="1"/>
</dbReference>
<dbReference type="Pfam" id="PF03449">
    <property type="entry name" value="GreA_GreB_N"/>
    <property type="match status" value="1"/>
</dbReference>
<dbReference type="PIRSF" id="PIRSF006092">
    <property type="entry name" value="GreA_GreB"/>
    <property type="match status" value="1"/>
</dbReference>
<dbReference type="SUPFAM" id="SSF54534">
    <property type="entry name" value="FKBP-like"/>
    <property type="match status" value="1"/>
</dbReference>
<dbReference type="SUPFAM" id="SSF46557">
    <property type="entry name" value="GreA transcript cleavage protein, N-terminal domain"/>
    <property type="match status" value="1"/>
</dbReference>
<gene>
    <name evidence="1" type="primary">greA</name>
    <name type="ordered locus">MAG3850</name>
</gene>
<evidence type="ECO:0000255" key="1">
    <source>
        <dbReference type="HAMAP-Rule" id="MF_00105"/>
    </source>
</evidence>
<proteinExistence type="inferred from homology"/>
<comment type="function">
    <text evidence="1">Necessary for efficient RNA polymerase transcription elongation past template-encoded arresting sites. The arresting sites in DNA have the property of trapping a certain fraction of elongating RNA polymerases that pass through, resulting in locked ternary complexes. Cleavage of the nascent transcript by cleavage factors such as GreA or GreB allows the resumption of elongation from the new 3'terminus. GreA releases sequences of 2 to 3 nucleotides.</text>
</comment>
<comment type="similarity">
    <text evidence="1">Belongs to the GreA/GreB family.</text>
</comment>
<feature type="chain" id="PRO_1000202863" description="Transcription elongation factor GreA">
    <location>
        <begin position="1"/>
        <end position="163"/>
    </location>
</feature>
<feature type="coiled-coil region" evidence="1">
    <location>
        <begin position="49"/>
        <end position="80"/>
    </location>
</feature>
<name>GREA_MYCAP</name>
<sequence>MALLGNEKIYLSEETYNKYKNEYTELVTVERPAVQASLKEARAQGDLSENAEYDAARDRQSEVERRILELERILENAEIIDTKSAVQNKAGIGATVRYLNMKTNKELVVTIMGPHDSNPIENKISNESPVAQAIMEANGIGDVVEVEVPQKYNIKVLDISYAK</sequence>
<organism>
    <name type="scientific">Mycoplasmopsis agalactiae (strain NCTC 10123 / CIP 59.7 / PG2)</name>
    <name type="common">Mycoplasma agalactiae</name>
    <dbReference type="NCBI Taxonomy" id="347257"/>
    <lineage>
        <taxon>Bacteria</taxon>
        <taxon>Bacillati</taxon>
        <taxon>Mycoplasmatota</taxon>
        <taxon>Mycoplasmoidales</taxon>
        <taxon>Metamycoplasmataceae</taxon>
        <taxon>Mycoplasmopsis</taxon>
    </lineage>
</organism>